<proteinExistence type="inferred from homology"/>
<organism>
    <name type="scientific">Pseudomonas syringae pv. tomato (strain ATCC BAA-871 / DC3000)</name>
    <dbReference type="NCBI Taxonomy" id="223283"/>
    <lineage>
        <taxon>Bacteria</taxon>
        <taxon>Pseudomonadati</taxon>
        <taxon>Pseudomonadota</taxon>
        <taxon>Gammaproteobacteria</taxon>
        <taxon>Pseudomonadales</taxon>
        <taxon>Pseudomonadaceae</taxon>
        <taxon>Pseudomonas</taxon>
    </lineage>
</organism>
<reference key="1">
    <citation type="journal article" date="2003" name="Proc. Natl. Acad. Sci. U.S.A.">
        <title>The complete genome sequence of the Arabidopsis and tomato pathogen Pseudomonas syringae pv. tomato DC3000.</title>
        <authorList>
            <person name="Buell C.R."/>
            <person name="Joardar V."/>
            <person name="Lindeberg M."/>
            <person name="Selengut J."/>
            <person name="Paulsen I.T."/>
            <person name="Gwinn M.L."/>
            <person name="Dodson R.J."/>
            <person name="DeBoy R.T."/>
            <person name="Durkin A.S."/>
            <person name="Kolonay J.F."/>
            <person name="Madupu R."/>
            <person name="Daugherty S.C."/>
            <person name="Brinkac L.M."/>
            <person name="Beanan M.J."/>
            <person name="Haft D.H."/>
            <person name="Nelson W.C."/>
            <person name="Davidsen T.M."/>
            <person name="Zafar N."/>
            <person name="Zhou L."/>
            <person name="Liu J."/>
            <person name="Yuan Q."/>
            <person name="Khouri H.M."/>
            <person name="Fedorova N.B."/>
            <person name="Tran B."/>
            <person name="Russell D."/>
            <person name="Berry K.J."/>
            <person name="Utterback T.R."/>
            <person name="Van Aken S.E."/>
            <person name="Feldblyum T.V."/>
            <person name="D'Ascenzo M."/>
            <person name="Deng W.-L."/>
            <person name="Ramos A.R."/>
            <person name="Alfano J.R."/>
            <person name="Cartinhour S."/>
            <person name="Chatterjee A.K."/>
            <person name="Delaney T.P."/>
            <person name="Lazarowitz S.G."/>
            <person name="Martin G.B."/>
            <person name="Schneider D.J."/>
            <person name="Tang X."/>
            <person name="Bender C.L."/>
            <person name="White O."/>
            <person name="Fraser C.M."/>
            <person name="Collmer A."/>
        </authorList>
    </citation>
    <scope>NUCLEOTIDE SEQUENCE [LARGE SCALE GENOMIC DNA]</scope>
    <source>
        <strain>ATCC BAA-871 / DC3000</strain>
    </source>
</reference>
<keyword id="KW-1185">Reference proteome</keyword>
<evidence type="ECO:0000255" key="1">
    <source>
        <dbReference type="HAMAP-Rule" id="MF_01866"/>
    </source>
</evidence>
<gene>
    <name type="ordered locus">PSPTO_3921</name>
</gene>
<dbReference type="EMBL" id="AE016853">
    <property type="protein sequence ID" value="AAO57387.1"/>
    <property type="molecule type" value="Genomic_DNA"/>
</dbReference>
<dbReference type="RefSeq" id="NP_793692.1">
    <property type="nucleotide sequence ID" value="NC_004578.1"/>
</dbReference>
<dbReference type="RefSeq" id="WP_003379038.1">
    <property type="nucleotide sequence ID" value="NC_004578.1"/>
</dbReference>
<dbReference type="SMR" id="Q87Y82"/>
<dbReference type="STRING" id="223283.PSPTO_3921"/>
<dbReference type="KEGG" id="pst:PSPTO_3921"/>
<dbReference type="PATRIC" id="fig|223283.9.peg.4020"/>
<dbReference type="eggNOG" id="COG3100">
    <property type="taxonomic scope" value="Bacteria"/>
</dbReference>
<dbReference type="HOGENOM" id="CLU_155118_2_0_6"/>
<dbReference type="OrthoDB" id="7062382at2"/>
<dbReference type="PhylomeDB" id="Q87Y82"/>
<dbReference type="Proteomes" id="UP000002515">
    <property type="component" value="Chromosome"/>
</dbReference>
<dbReference type="Gene3D" id="3.10.510.20">
    <property type="entry name" value="YcgL domain"/>
    <property type="match status" value="1"/>
</dbReference>
<dbReference type="HAMAP" id="MF_01866">
    <property type="entry name" value="UPF0745"/>
    <property type="match status" value="1"/>
</dbReference>
<dbReference type="InterPro" id="IPR038068">
    <property type="entry name" value="YcgL-like_sf"/>
</dbReference>
<dbReference type="InterPro" id="IPR027354">
    <property type="entry name" value="YcgL_dom"/>
</dbReference>
<dbReference type="PANTHER" id="PTHR38109">
    <property type="entry name" value="PROTEIN YCGL"/>
    <property type="match status" value="1"/>
</dbReference>
<dbReference type="PANTHER" id="PTHR38109:SF1">
    <property type="entry name" value="PROTEIN YCGL"/>
    <property type="match status" value="1"/>
</dbReference>
<dbReference type="Pfam" id="PF05166">
    <property type="entry name" value="YcgL"/>
    <property type="match status" value="1"/>
</dbReference>
<dbReference type="SUPFAM" id="SSF160191">
    <property type="entry name" value="YcgL-like"/>
    <property type="match status" value="1"/>
</dbReference>
<dbReference type="PROSITE" id="PS51648">
    <property type="entry name" value="YCGL"/>
    <property type="match status" value="1"/>
</dbReference>
<sequence length="97" mass="11348">MKRICSIYRSPKRNEMYLYVLKSDVLKRVPPELLVAFGKPVHAFDLVLSPERALSREDINAVLKNLDSQGYHLQMPPAEDEYIEHLPEELLRRNDPM</sequence>
<name>Y3921_PSESM</name>
<protein>
    <recommendedName>
        <fullName evidence="1">YcgL domain-containing protein PSPTO_3921</fullName>
    </recommendedName>
</protein>
<feature type="chain" id="PRO_0000375342" description="YcgL domain-containing protein PSPTO_3921">
    <location>
        <begin position="1"/>
        <end position="97"/>
    </location>
</feature>
<feature type="domain" description="YcgL" evidence="1">
    <location>
        <begin position="3"/>
        <end position="87"/>
    </location>
</feature>
<accession>Q87Y82</accession>